<protein>
    <recommendedName>
        <fullName evidence="1">7-cyano-7-deazaguanine synthase</fullName>
        <ecNumber evidence="1">6.3.4.20</ecNumber>
    </recommendedName>
    <alternativeName>
        <fullName evidence="1">7-cyano-7-carbaguanine synthase</fullName>
    </alternativeName>
    <alternativeName>
        <fullName evidence="1">PreQ(0) synthase</fullName>
    </alternativeName>
    <alternativeName>
        <fullName evidence="1">Queuosine biosynthesis protein QueC</fullName>
    </alternativeName>
</protein>
<proteinExistence type="inferred from homology"/>
<accession>Q3JXD3</accession>
<reference key="1">
    <citation type="journal article" date="2010" name="Genome Biol. Evol.">
        <title>Continuing evolution of Burkholderia mallei through genome reduction and large-scale rearrangements.</title>
        <authorList>
            <person name="Losada L."/>
            <person name="Ronning C.M."/>
            <person name="DeShazer D."/>
            <person name="Woods D."/>
            <person name="Fedorova N."/>
            <person name="Kim H.S."/>
            <person name="Shabalina S.A."/>
            <person name="Pearson T.R."/>
            <person name="Brinkac L."/>
            <person name="Tan P."/>
            <person name="Nandi T."/>
            <person name="Crabtree J."/>
            <person name="Badger J."/>
            <person name="Beckstrom-Sternberg S."/>
            <person name="Saqib M."/>
            <person name="Schutzer S.E."/>
            <person name="Keim P."/>
            <person name="Nierman W.C."/>
        </authorList>
    </citation>
    <scope>NUCLEOTIDE SEQUENCE [LARGE SCALE GENOMIC DNA]</scope>
    <source>
        <strain>1710b</strain>
    </source>
</reference>
<organism>
    <name type="scientific">Burkholderia pseudomallei (strain 1710b)</name>
    <dbReference type="NCBI Taxonomy" id="320372"/>
    <lineage>
        <taxon>Bacteria</taxon>
        <taxon>Pseudomonadati</taxon>
        <taxon>Pseudomonadota</taxon>
        <taxon>Betaproteobacteria</taxon>
        <taxon>Burkholderiales</taxon>
        <taxon>Burkholderiaceae</taxon>
        <taxon>Burkholderia</taxon>
        <taxon>pseudomallei group</taxon>
    </lineage>
</organism>
<dbReference type="EC" id="6.3.4.20" evidence="1"/>
<dbReference type="EMBL" id="CP000124">
    <property type="protein sequence ID" value="ABA48970.1"/>
    <property type="molecule type" value="Genomic_DNA"/>
</dbReference>
<dbReference type="RefSeq" id="WP_004190026.1">
    <property type="nucleotide sequence ID" value="NC_007434.1"/>
</dbReference>
<dbReference type="SMR" id="Q3JXD3"/>
<dbReference type="EnsemblBacteria" id="ABA48970">
    <property type="protein sequence ID" value="ABA48970"/>
    <property type="gene ID" value="BURPS1710b_0355"/>
</dbReference>
<dbReference type="GeneID" id="93058685"/>
<dbReference type="KEGG" id="bpm:BURPS1710b_0355"/>
<dbReference type="HOGENOM" id="CLU_081854_0_0_4"/>
<dbReference type="UniPathway" id="UPA00391"/>
<dbReference type="Proteomes" id="UP000002700">
    <property type="component" value="Chromosome I"/>
</dbReference>
<dbReference type="GO" id="GO:0005524">
    <property type="term" value="F:ATP binding"/>
    <property type="evidence" value="ECO:0007669"/>
    <property type="project" value="UniProtKB-UniRule"/>
</dbReference>
<dbReference type="GO" id="GO:0016879">
    <property type="term" value="F:ligase activity, forming carbon-nitrogen bonds"/>
    <property type="evidence" value="ECO:0007669"/>
    <property type="project" value="UniProtKB-UniRule"/>
</dbReference>
<dbReference type="GO" id="GO:0008270">
    <property type="term" value="F:zinc ion binding"/>
    <property type="evidence" value="ECO:0007669"/>
    <property type="project" value="UniProtKB-UniRule"/>
</dbReference>
<dbReference type="GO" id="GO:0008616">
    <property type="term" value="P:queuosine biosynthetic process"/>
    <property type="evidence" value="ECO:0007669"/>
    <property type="project" value="UniProtKB-UniRule"/>
</dbReference>
<dbReference type="CDD" id="cd01995">
    <property type="entry name" value="QueC-like"/>
    <property type="match status" value="1"/>
</dbReference>
<dbReference type="Gene3D" id="3.40.50.620">
    <property type="entry name" value="HUPs"/>
    <property type="match status" value="1"/>
</dbReference>
<dbReference type="HAMAP" id="MF_01633">
    <property type="entry name" value="QueC"/>
    <property type="match status" value="1"/>
</dbReference>
<dbReference type="InterPro" id="IPR018317">
    <property type="entry name" value="QueC"/>
</dbReference>
<dbReference type="InterPro" id="IPR014729">
    <property type="entry name" value="Rossmann-like_a/b/a_fold"/>
</dbReference>
<dbReference type="NCBIfam" id="TIGR00364">
    <property type="entry name" value="7-cyano-7-deazaguanine synthase QueC"/>
    <property type="match status" value="1"/>
</dbReference>
<dbReference type="PANTHER" id="PTHR42914">
    <property type="entry name" value="7-CYANO-7-DEAZAGUANINE SYNTHASE"/>
    <property type="match status" value="1"/>
</dbReference>
<dbReference type="PANTHER" id="PTHR42914:SF1">
    <property type="entry name" value="7-CYANO-7-DEAZAGUANINE SYNTHASE"/>
    <property type="match status" value="1"/>
</dbReference>
<dbReference type="Pfam" id="PF06508">
    <property type="entry name" value="QueC"/>
    <property type="match status" value="1"/>
</dbReference>
<dbReference type="PIRSF" id="PIRSF006293">
    <property type="entry name" value="ExsB"/>
    <property type="match status" value="1"/>
</dbReference>
<dbReference type="SUPFAM" id="SSF52402">
    <property type="entry name" value="Adenine nucleotide alpha hydrolases-like"/>
    <property type="match status" value="1"/>
</dbReference>
<comment type="function">
    <text evidence="1">Catalyzes the ATP-dependent conversion of 7-carboxy-7-deazaguanine (CDG) to 7-cyano-7-deazaguanine (preQ(0)).</text>
</comment>
<comment type="catalytic activity">
    <reaction evidence="1">
        <text>7-carboxy-7-deazaguanine + NH4(+) + ATP = 7-cyano-7-deazaguanine + ADP + phosphate + H2O + H(+)</text>
        <dbReference type="Rhea" id="RHEA:27982"/>
        <dbReference type="ChEBI" id="CHEBI:15377"/>
        <dbReference type="ChEBI" id="CHEBI:15378"/>
        <dbReference type="ChEBI" id="CHEBI:28938"/>
        <dbReference type="ChEBI" id="CHEBI:30616"/>
        <dbReference type="ChEBI" id="CHEBI:43474"/>
        <dbReference type="ChEBI" id="CHEBI:45075"/>
        <dbReference type="ChEBI" id="CHEBI:61036"/>
        <dbReference type="ChEBI" id="CHEBI:456216"/>
        <dbReference type="EC" id="6.3.4.20"/>
    </reaction>
</comment>
<comment type="cofactor">
    <cofactor evidence="1">
        <name>Zn(2+)</name>
        <dbReference type="ChEBI" id="CHEBI:29105"/>
    </cofactor>
    <text evidence="1">Binds 1 zinc ion per subunit.</text>
</comment>
<comment type="pathway">
    <text evidence="1">Purine metabolism; 7-cyano-7-deazaguanine biosynthesis.</text>
</comment>
<comment type="similarity">
    <text evidence="1">Belongs to the QueC family.</text>
</comment>
<evidence type="ECO:0000255" key="1">
    <source>
        <dbReference type="HAMAP-Rule" id="MF_01633"/>
    </source>
</evidence>
<keyword id="KW-0067">ATP-binding</keyword>
<keyword id="KW-0436">Ligase</keyword>
<keyword id="KW-0479">Metal-binding</keyword>
<keyword id="KW-0547">Nucleotide-binding</keyword>
<keyword id="KW-0671">Queuosine biosynthesis</keyword>
<keyword id="KW-0862">Zinc</keyword>
<name>QUEC_BURP1</name>
<sequence>MIRTDAKDGALVLFSGGQDSATCVAWALERYQTVETLGFDYGQRHRVELECREGVRDALKRRFPQWSHKLGDDHLIDLSVLGSISDTAMTRAIEIETASNGLPNTFVPGRNLLFMTIAAAIAYRRGLRALVGGMCETDFSGYPDCRDDTMKALQVALNLGMDTRFVLETPLMWLDKADTWRLAEQLGGAPLVELIRVETHTCYVGERSELHDWGFGCGECPACKLRKRGYDAYLRGESVTEAPA</sequence>
<feature type="chain" id="PRO_0000246819" description="7-cyano-7-deazaguanine synthase">
    <location>
        <begin position="1"/>
        <end position="244"/>
    </location>
</feature>
<feature type="binding site" evidence="1">
    <location>
        <begin position="14"/>
        <end position="24"/>
    </location>
    <ligand>
        <name>ATP</name>
        <dbReference type="ChEBI" id="CHEBI:30616"/>
    </ligand>
</feature>
<feature type="binding site" evidence="1">
    <location>
        <position position="202"/>
    </location>
    <ligand>
        <name>Zn(2+)</name>
        <dbReference type="ChEBI" id="CHEBI:29105"/>
    </ligand>
</feature>
<feature type="binding site" evidence="1">
    <location>
        <position position="217"/>
    </location>
    <ligand>
        <name>Zn(2+)</name>
        <dbReference type="ChEBI" id="CHEBI:29105"/>
    </ligand>
</feature>
<feature type="binding site" evidence="1">
    <location>
        <position position="220"/>
    </location>
    <ligand>
        <name>Zn(2+)</name>
        <dbReference type="ChEBI" id="CHEBI:29105"/>
    </ligand>
</feature>
<feature type="binding site" evidence="1">
    <location>
        <position position="223"/>
    </location>
    <ligand>
        <name>Zn(2+)</name>
        <dbReference type="ChEBI" id="CHEBI:29105"/>
    </ligand>
</feature>
<gene>
    <name evidence="1" type="primary">queC</name>
    <name type="ordered locus">BURPS1710b_0355</name>
</gene>